<feature type="chain" id="PRO_0000070250" description="G-protein coupled receptor homolog FPV206">
    <location>
        <begin position="1"/>
        <end position="308"/>
    </location>
</feature>
<feature type="topological domain" description="Extracellular" evidence="1">
    <location>
        <begin position="1"/>
        <end position="20"/>
    </location>
</feature>
<feature type="transmembrane region" description="Helical; Name=1" evidence="1">
    <location>
        <begin position="21"/>
        <end position="41"/>
    </location>
</feature>
<feature type="topological domain" description="Cytoplasmic" evidence="1">
    <location>
        <begin position="42"/>
        <end position="52"/>
    </location>
</feature>
<feature type="transmembrane region" description="Helical; Name=2" evidence="1">
    <location>
        <begin position="53"/>
        <end position="73"/>
    </location>
</feature>
<feature type="topological domain" description="Extracellular" evidence="1">
    <location>
        <begin position="74"/>
        <end position="91"/>
    </location>
</feature>
<feature type="transmembrane region" description="Helical; Name=3" evidence="1">
    <location>
        <begin position="92"/>
        <end position="112"/>
    </location>
</feature>
<feature type="topological domain" description="Cytoplasmic" evidence="1">
    <location>
        <begin position="113"/>
        <end position="133"/>
    </location>
</feature>
<feature type="transmembrane region" description="Helical; Name=4" evidence="1">
    <location>
        <begin position="134"/>
        <end position="154"/>
    </location>
</feature>
<feature type="topological domain" description="Extracellular" evidence="1">
    <location>
        <begin position="155"/>
        <end position="180"/>
    </location>
</feature>
<feature type="transmembrane region" description="Helical; Name=5" evidence="1">
    <location>
        <begin position="181"/>
        <end position="201"/>
    </location>
</feature>
<feature type="topological domain" description="Cytoplasmic" evidence="1">
    <location>
        <begin position="202"/>
        <end position="226"/>
    </location>
</feature>
<feature type="transmembrane region" description="Helical; Name=6" evidence="1">
    <location>
        <begin position="227"/>
        <end position="247"/>
    </location>
</feature>
<feature type="topological domain" description="Extracellular" evidence="1">
    <location>
        <begin position="248"/>
        <end position="270"/>
    </location>
</feature>
<feature type="transmembrane region" description="Helical; Name=7" evidence="1">
    <location>
        <begin position="271"/>
        <end position="291"/>
    </location>
</feature>
<feature type="topological domain" description="Cytoplasmic" evidence="1">
    <location>
        <begin position="292"/>
        <end position="308"/>
    </location>
</feature>
<feature type="glycosylation site" description="N-linked (GlcNAc...) asparagine; by host" evidence="1">
    <location>
        <position position="2"/>
    </location>
</feature>
<feature type="glycosylation site" description="N-linked (GlcNAc...) asparagine; by host" evidence="1">
    <location>
        <position position="262"/>
    </location>
</feature>
<feature type="disulfide bond" evidence="2">
    <location>
        <begin position="89"/>
        <end position="167"/>
    </location>
</feature>
<reference key="1">
    <citation type="journal article" date="2000" name="J. Virol.">
        <title>The genome of fowlpox virus.</title>
        <authorList>
            <person name="Afonso C.L."/>
            <person name="Tulman E.R."/>
            <person name="Lu Z."/>
            <person name="Zsak L."/>
            <person name="Kutish G.F."/>
            <person name="Rock D.L."/>
        </authorList>
    </citation>
    <scope>NUCLEOTIDE SEQUENCE [LARGE SCALE GENOMIC DNA]</scope>
</reference>
<proteinExistence type="inferred from homology"/>
<keyword id="KW-1015">Disulfide bond</keyword>
<keyword id="KW-0297">G-protein coupled receptor</keyword>
<keyword id="KW-0325">Glycoprotein</keyword>
<keyword id="KW-1032">Host cell membrane</keyword>
<keyword id="KW-1043">Host membrane</keyword>
<keyword id="KW-0472">Membrane</keyword>
<keyword id="KW-0675">Receptor</keyword>
<keyword id="KW-1185">Reference proteome</keyword>
<keyword id="KW-0807">Transducer</keyword>
<keyword id="KW-0812">Transmembrane</keyword>
<keyword id="KW-1133">Transmembrane helix</keyword>
<organismHost>
    <name type="scientific">Vertebrata</name>
    <dbReference type="NCBI Taxonomy" id="7742"/>
</organismHost>
<dbReference type="EMBL" id="AF198100">
    <property type="protein sequence ID" value="AAF44550.1"/>
    <property type="molecule type" value="Genomic_DNA"/>
</dbReference>
<dbReference type="RefSeq" id="NP_039169.1">
    <property type="nucleotide sequence ID" value="NC_002188.1"/>
</dbReference>
<dbReference type="SMR" id="Q9J529"/>
<dbReference type="GeneID" id="1486778"/>
<dbReference type="KEGG" id="vg:1486778"/>
<dbReference type="Proteomes" id="UP000008597">
    <property type="component" value="Segment"/>
</dbReference>
<dbReference type="GO" id="GO:0020002">
    <property type="term" value="C:host cell plasma membrane"/>
    <property type="evidence" value="ECO:0007669"/>
    <property type="project" value="UniProtKB-SubCell"/>
</dbReference>
<dbReference type="GO" id="GO:0016020">
    <property type="term" value="C:membrane"/>
    <property type="evidence" value="ECO:0007669"/>
    <property type="project" value="UniProtKB-KW"/>
</dbReference>
<dbReference type="GO" id="GO:0004930">
    <property type="term" value="F:G protein-coupled receptor activity"/>
    <property type="evidence" value="ECO:0007669"/>
    <property type="project" value="UniProtKB-KW"/>
</dbReference>
<dbReference type="GO" id="GO:0008142">
    <property type="term" value="F:oxysterol binding"/>
    <property type="evidence" value="ECO:0007669"/>
    <property type="project" value="InterPro"/>
</dbReference>
<dbReference type="Gene3D" id="1.20.1070.10">
    <property type="entry name" value="Rhodopsin 7-helix transmembrane proteins"/>
    <property type="match status" value="1"/>
</dbReference>
<dbReference type="InterPro" id="IPR047160">
    <property type="entry name" value="GP183-like"/>
</dbReference>
<dbReference type="InterPro" id="IPR000276">
    <property type="entry name" value="GPCR_Rhodpsn"/>
</dbReference>
<dbReference type="InterPro" id="IPR017452">
    <property type="entry name" value="GPCR_Rhodpsn_7TM"/>
</dbReference>
<dbReference type="PANTHER" id="PTHR24237">
    <property type="entry name" value="G-PROTEIN COUPLED RECEPTOR"/>
    <property type="match status" value="1"/>
</dbReference>
<dbReference type="Pfam" id="PF00001">
    <property type="entry name" value="7tm_1"/>
    <property type="match status" value="1"/>
</dbReference>
<dbReference type="PRINTS" id="PR00237">
    <property type="entry name" value="GPCRRHODOPSN"/>
</dbReference>
<dbReference type="PRINTS" id="PR01157">
    <property type="entry name" value="P2YPURNOCPTR"/>
</dbReference>
<dbReference type="SUPFAM" id="SSF81321">
    <property type="entry name" value="Family A G protein-coupled receptor-like"/>
    <property type="match status" value="1"/>
</dbReference>
<dbReference type="PROSITE" id="PS00237">
    <property type="entry name" value="G_PROTEIN_RECEP_F1_1"/>
    <property type="match status" value="1"/>
</dbReference>
<dbReference type="PROSITE" id="PS50262">
    <property type="entry name" value="G_PROTEIN_RECEP_F1_2"/>
    <property type="match status" value="1"/>
</dbReference>
<protein>
    <recommendedName>
        <fullName>G-protein coupled receptor homolog FPV206</fullName>
    </recommendedName>
</protein>
<sequence>MNFTGDCLLYAGYEKLSLSLAVVTILIFSSSLILNISALVIGFYTTAPGPMKMYLINLIVSDILFTVTLPLKIDYYYYFFNWRWGEMACRIMSFLSYINTYVSINFMTWISVNRYYAVTRPHKYNSRDNIMRTKIACACTWVIILVPMSSILFVSTTSSDHETKIRCMEYNKVGDSMYLPPWVTIVMCFIGFVIPFAMMAISYSAVCYTVLSGISKSTRSYRTCKLVACILTEFVICFLPYHASVISYMIHIITSKTVLCENVSYYQMLLHATQCLMKLNCCMDPIIYLFVSSYKSKAKSNSIKLMFK</sequence>
<organism>
    <name type="scientific">Fowlpox virus (strain NVSL)</name>
    <name type="common">FPV</name>
    <dbReference type="NCBI Taxonomy" id="928301"/>
    <lineage>
        <taxon>Viruses</taxon>
        <taxon>Varidnaviria</taxon>
        <taxon>Bamfordvirae</taxon>
        <taxon>Nucleocytoviricota</taxon>
        <taxon>Pokkesviricetes</taxon>
        <taxon>Chitovirales</taxon>
        <taxon>Poxviridae</taxon>
        <taxon>Chordopoxvirinae</taxon>
        <taxon>Avipoxvirus</taxon>
        <taxon>Fowlpox virus</taxon>
    </lineage>
</organism>
<accession>Q9J529</accession>
<gene>
    <name type="ordered locus">FPV206</name>
</gene>
<comment type="subcellular location">
    <subcellularLocation>
        <location evidence="3">Host cell membrane</location>
        <topology evidence="3">Multi-pass membrane protein</topology>
    </subcellularLocation>
</comment>
<comment type="similarity">
    <text evidence="2">Belongs to the G-protein coupled receptor 1 family.</text>
</comment>
<evidence type="ECO:0000255" key="1"/>
<evidence type="ECO:0000255" key="2">
    <source>
        <dbReference type="PROSITE-ProRule" id="PRU00521"/>
    </source>
</evidence>
<evidence type="ECO:0000305" key="3"/>
<name>V206_FOWPN</name>